<organism>
    <name type="scientific">Margaritifera margaritifera</name>
    <name type="common">Freshwater pearl mussel</name>
    <dbReference type="NCBI Taxonomy" id="102329"/>
    <lineage>
        <taxon>Eukaryota</taxon>
        <taxon>Metazoa</taxon>
        <taxon>Spiralia</taxon>
        <taxon>Lophotrochozoa</taxon>
        <taxon>Mollusca</taxon>
        <taxon>Bivalvia</taxon>
        <taxon>Autobranchia</taxon>
        <taxon>Pteriomorphia</taxon>
        <taxon>Pterioida</taxon>
        <taxon>Pterioidea</taxon>
        <taxon>Pteriidae</taxon>
        <taxon>Pinctada</taxon>
    </lineage>
</organism>
<evidence type="ECO:0000255" key="1"/>
<evidence type="ECO:0000256" key="2">
    <source>
        <dbReference type="SAM" id="MobiDB-lite"/>
    </source>
</evidence>
<evidence type="ECO:0000269" key="3">
    <source>
    </source>
</evidence>
<evidence type="ECO:0000305" key="4"/>
<accession>H2A0P1</accession>
<proteinExistence type="evidence at protein level"/>
<keyword id="KW-0903">Direct protein sequencing</keyword>
<keyword id="KW-0964">Secreted</keyword>
<keyword id="KW-0732">Signal</keyword>
<comment type="subcellular location">
    <subcellularLocation>
        <location evidence="3">Secreted</location>
    </subcellularLocation>
</comment>
<comment type="tissue specificity">
    <text evidence="3">Nacreous layer of shell (at protein level).</text>
</comment>
<protein>
    <recommendedName>
        <fullName>Uncharacterized shell protein 10</fullName>
    </recommendedName>
    <alternativeName>
        <fullName>Nacre uncharacterized shell protein 17</fullName>
    </alternativeName>
</protein>
<reference evidence="4" key="1">
    <citation type="journal article" date="2010" name="BMC Genomics">
        <title>Transcriptome and proteome analysis of Pinctada margaritifera calcifying mantle and shell: focus on biomineralization.</title>
        <authorList>
            <person name="Joubert C."/>
            <person name="Piquemal D."/>
            <person name="Marie B."/>
            <person name="Manchon L."/>
            <person name="Pierrat F."/>
            <person name="Zanella-Cleon I."/>
            <person name="Cochennec-Laureau N."/>
            <person name="Gueguen Y."/>
            <person name="Montagnani C."/>
        </authorList>
    </citation>
    <scope>NUCLEOTIDE SEQUENCE [MRNA]</scope>
    <scope>IDENTIFICATION</scope>
    <source>
        <tissue>Mantle</tissue>
    </source>
</reference>
<reference key="2">
    <citation type="journal article" date="2012" name="Proc. Natl. Acad. Sci. U.S.A.">
        <title>Different secretory repertoires control the biomineralization processes of prism and nacre deposition of the pearl oyster shell.</title>
        <authorList>
            <person name="Marie B."/>
            <person name="Joubert C."/>
            <person name="Tayale A."/>
            <person name="Zanella-Cleon I."/>
            <person name="Belliard C."/>
            <person name="Piquemal D."/>
            <person name="Cochennec-Laureau N."/>
            <person name="Marin F."/>
            <person name="Gueguen Y."/>
            <person name="Montagnani C."/>
        </authorList>
    </citation>
    <scope>PROTEIN SEQUENCE OF 35-47</scope>
    <scope>SUBCELLULAR LOCATION</scope>
    <scope>TISSUE SPECIFICITY</scope>
    <source>
        <tissue>Shell</tissue>
    </source>
</reference>
<sequence>MKCLVVLTALFGISTASFLGCNLSPVWGVKNAYRSGLQTYWCPPGLKFDPFGCCCDFPFDDLVEDLAGLLGGAGNGGNGGGGNGGNGGGGNGGNNGNGNGNNGLKKYETCYDC</sequence>
<name>USP10_PINMG</name>
<dbReference type="EMBL" id="HE610408">
    <property type="protein sequence ID" value="CCE46182.1"/>
    <property type="molecule type" value="mRNA"/>
</dbReference>
<dbReference type="GO" id="GO:0005576">
    <property type="term" value="C:extracellular region"/>
    <property type="evidence" value="ECO:0007669"/>
    <property type="project" value="UniProtKB-SubCell"/>
</dbReference>
<feature type="signal peptide" evidence="1">
    <location>
        <begin position="1"/>
        <end position="16"/>
    </location>
</feature>
<feature type="chain" id="PRO_0000417930" description="Uncharacterized shell protein 10" evidence="1">
    <location>
        <begin position="17"/>
        <end position="113"/>
    </location>
</feature>
<feature type="region of interest" description="Disordered" evidence="2">
    <location>
        <begin position="81"/>
        <end position="103"/>
    </location>
</feature>
<feature type="compositionally biased region" description="Gly residues" evidence="2">
    <location>
        <begin position="81"/>
        <end position="101"/>
    </location>
</feature>